<name>LOLB_SHIFL</name>
<reference key="1">
    <citation type="journal article" date="2002" name="Nucleic Acids Res.">
        <title>Genome sequence of Shigella flexneri 2a: insights into pathogenicity through comparison with genomes of Escherichia coli K12 and O157.</title>
        <authorList>
            <person name="Jin Q."/>
            <person name="Yuan Z."/>
            <person name="Xu J."/>
            <person name="Wang Y."/>
            <person name="Shen Y."/>
            <person name="Lu W."/>
            <person name="Wang J."/>
            <person name="Liu H."/>
            <person name="Yang J."/>
            <person name="Yang F."/>
            <person name="Zhang X."/>
            <person name="Zhang J."/>
            <person name="Yang G."/>
            <person name="Wu H."/>
            <person name="Qu D."/>
            <person name="Dong J."/>
            <person name="Sun L."/>
            <person name="Xue Y."/>
            <person name="Zhao A."/>
            <person name="Gao Y."/>
            <person name="Zhu J."/>
            <person name="Kan B."/>
            <person name="Ding K."/>
            <person name="Chen S."/>
            <person name="Cheng H."/>
            <person name="Yao Z."/>
            <person name="He B."/>
            <person name="Chen R."/>
            <person name="Ma D."/>
            <person name="Qiang B."/>
            <person name="Wen Y."/>
            <person name="Hou Y."/>
            <person name="Yu J."/>
        </authorList>
    </citation>
    <scope>NUCLEOTIDE SEQUENCE [LARGE SCALE GENOMIC DNA]</scope>
    <source>
        <strain>301 / Serotype 2a</strain>
    </source>
</reference>
<reference key="2">
    <citation type="journal article" date="2003" name="Infect. Immun.">
        <title>Complete genome sequence and comparative genomics of Shigella flexneri serotype 2a strain 2457T.</title>
        <authorList>
            <person name="Wei J."/>
            <person name="Goldberg M.B."/>
            <person name="Burland V."/>
            <person name="Venkatesan M.M."/>
            <person name="Deng W."/>
            <person name="Fournier G."/>
            <person name="Mayhew G.F."/>
            <person name="Plunkett G. III"/>
            <person name="Rose D.J."/>
            <person name="Darling A."/>
            <person name="Mau B."/>
            <person name="Perna N.T."/>
            <person name="Payne S.M."/>
            <person name="Runyen-Janecky L.J."/>
            <person name="Zhou S."/>
            <person name="Schwartz D.C."/>
            <person name="Blattner F.R."/>
        </authorList>
    </citation>
    <scope>NUCLEOTIDE SEQUENCE [LARGE SCALE GENOMIC DNA]</scope>
    <source>
        <strain>ATCC 700930 / 2457T / Serotype 2a</strain>
    </source>
</reference>
<organism>
    <name type="scientific">Shigella flexneri</name>
    <dbReference type="NCBI Taxonomy" id="623"/>
    <lineage>
        <taxon>Bacteria</taxon>
        <taxon>Pseudomonadati</taxon>
        <taxon>Pseudomonadota</taxon>
        <taxon>Gammaproteobacteria</taxon>
        <taxon>Enterobacterales</taxon>
        <taxon>Enterobacteriaceae</taxon>
        <taxon>Shigella</taxon>
    </lineage>
</organism>
<dbReference type="EMBL" id="AE005674">
    <property type="protein sequence ID" value="AAN42825.1"/>
    <property type="molecule type" value="Genomic_DNA"/>
</dbReference>
<dbReference type="EMBL" id="AE014073">
    <property type="protein sequence ID" value="AAP16711.1"/>
    <property type="molecule type" value="Genomic_DNA"/>
</dbReference>
<dbReference type="RefSeq" id="NP_707118.1">
    <property type="nucleotide sequence ID" value="NC_004337.2"/>
</dbReference>
<dbReference type="RefSeq" id="WP_001130692.1">
    <property type="nucleotide sequence ID" value="NZ_WPGW01000029.1"/>
</dbReference>
<dbReference type="SMR" id="P61322"/>
<dbReference type="STRING" id="198214.SF1212"/>
<dbReference type="DrugBank" id="DB02078">
    <property type="generic name" value="Triglyme"/>
</dbReference>
<dbReference type="PaxDb" id="198214-SF1212"/>
<dbReference type="GeneID" id="1024152"/>
<dbReference type="GeneID" id="93775274"/>
<dbReference type="KEGG" id="sfl:SF1212"/>
<dbReference type="KEGG" id="sfx:S1296"/>
<dbReference type="PATRIC" id="fig|198214.7.peg.1429"/>
<dbReference type="HOGENOM" id="CLU_092816_1_1_6"/>
<dbReference type="Proteomes" id="UP000001006">
    <property type="component" value="Chromosome"/>
</dbReference>
<dbReference type="Proteomes" id="UP000002673">
    <property type="component" value="Chromosome"/>
</dbReference>
<dbReference type="GO" id="GO:0009279">
    <property type="term" value="C:cell outer membrane"/>
    <property type="evidence" value="ECO:0007669"/>
    <property type="project" value="UniProtKB-SubCell"/>
</dbReference>
<dbReference type="GO" id="GO:0044874">
    <property type="term" value="P:lipoprotein localization to outer membrane"/>
    <property type="evidence" value="ECO:0007669"/>
    <property type="project" value="UniProtKB-UniRule"/>
</dbReference>
<dbReference type="GO" id="GO:0015031">
    <property type="term" value="P:protein transport"/>
    <property type="evidence" value="ECO:0007669"/>
    <property type="project" value="UniProtKB-KW"/>
</dbReference>
<dbReference type="CDD" id="cd16326">
    <property type="entry name" value="LolB"/>
    <property type="match status" value="1"/>
</dbReference>
<dbReference type="FunFam" id="2.50.20.10:FF:000002">
    <property type="entry name" value="Outer-membrane lipoprotein LolB"/>
    <property type="match status" value="1"/>
</dbReference>
<dbReference type="Gene3D" id="2.50.20.10">
    <property type="entry name" value="Lipoprotein localisation LolA/LolB/LppX"/>
    <property type="match status" value="1"/>
</dbReference>
<dbReference type="HAMAP" id="MF_00233">
    <property type="entry name" value="LolB"/>
    <property type="match status" value="1"/>
</dbReference>
<dbReference type="InterPro" id="IPR029046">
    <property type="entry name" value="LolA/LolB/LppX"/>
</dbReference>
<dbReference type="InterPro" id="IPR004565">
    <property type="entry name" value="OM_lipoprot_LolB"/>
</dbReference>
<dbReference type="NCBIfam" id="TIGR00548">
    <property type="entry name" value="lolB"/>
    <property type="match status" value="1"/>
</dbReference>
<dbReference type="Pfam" id="PF03550">
    <property type="entry name" value="LolB"/>
    <property type="match status" value="1"/>
</dbReference>
<dbReference type="SUPFAM" id="SSF89392">
    <property type="entry name" value="Prokaryotic lipoproteins and lipoprotein localization factors"/>
    <property type="match status" value="1"/>
</dbReference>
<dbReference type="PROSITE" id="PS51257">
    <property type="entry name" value="PROKAR_LIPOPROTEIN"/>
    <property type="match status" value="1"/>
</dbReference>
<evidence type="ECO:0000250" key="1"/>
<evidence type="ECO:0000305" key="2"/>
<proteinExistence type="inferred from homology"/>
<gene>
    <name type="primary">lolB</name>
    <name type="synonym">hemM</name>
    <name type="ordered locus">SF1212</name>
    <name type="ordered locus">S1296</name>
</gene>
<protein>
    <recommendedName>
        <fullName>Outer-membrane lipoprotein LolB</fullName>
    </recommendedName>
</protein>
<accession>P61322</accession>
<accession>P24208</accession>
<accession>Q46753</accession>
<feature type="signal peptide" evidence="1">
    <location>
        <begin position="1"/>
        <end position="21"/>
    </location>
</feature>
<feature type="chain" id="PRO_0000018313" description="Outer-membrane lipoprotein LolB">
    <location>
        <begin position="22"/>
        <end position="207"/>
    </location>
</feature>
<feature type="lipid moiety-binding region" description="N-palmitoyl cysteine" evidence="1">
    <location>
        <position position="22"/>
    </location>
</feature>
<feature type="lipid moiety-binding region" description="S-diacylglycerol cysteine" evidence="1">
    <location>
        <position position="22"/>
    </location>
</feature>
<keyword id="KW-0998">Cell outer membrane</keyword>
<keyword id="KW-0143">Chaperone</keyword>
<keyword id="KW-0449">Lipoprotein</keyword>
<keyword id="KW-0472">Membrane</keyword>
<keyword id="KW-0564">Palmitate</keyword>
<keyword id="KW-0653">Protein transport</keyword>
<keyword id="KW-1185">Reference proteome</keyword>
<keyword id="KW-0732">Signal</keyword>
<keyword id="KW-0813">Transport</keyword>
<comment type="function">
    <text evidence="1">Plays a critical role in the incorporation of lipoproteins in the outer membrane after they are released by the LolA protein.</text>
</comment>
<comment type="subunit">
    <text evidence="1">Monomer.</text>
</comment>
<comment type="subcellular location">
    <subcellularLocation>
        <location evidence="1">Cell outer membrane</location>
        <topology evidence="1">Lipid-anchor</topology>
    </subcellularLocation>
</comment>
<comment type="similarity">
    <text evidence="2">Belongs to the LolB family.</text>
</comment>
<sequence length="207" mass="23551">MPLPDFRLIRLLPLAALVLTACSVTTPKGPGKSPDSPQWRQHQQDVRNLNQYQTRGAFAYISDQQKVYARFFWQQTGQDRYRLLLTNPLGSTELELNAQPGNVQLVDNKGQRYTADDAEEMIGKLTGMPIPLNSLRQWILGLPGDATDYKLDDQYRLSEITYSQNGKNWKVVYGGYDTKTQPAMPANMELTDGGQRIKLKMDNWIVK</sequence>